<comment type="function">
    <text evidence="1">May be involved in recombination.</text>
</comment>
<comment type="subcellular location">
    <subcellularLocation>
        <location evidence="1">Cytoplasm</location>
        <location evidence="1">Nucleoid</location>
    </subcellularLocation>
</comment>
<comment type="similarity">
    <text evidence="1">Belongs to the RdgC family.</text>
</comment>
<sequence length="303" mass="34215">MWFSNLICYRFKQDVSYTQEDFDKALEQDLFRPCTGQELATFGWTKAFGKHGETLSHFSQKSILVCAKREEKVLPASVINELVAEKVDLIEAEENRPVKKKEKDELKENILHTLLPQAFKKSSLQFAFIDQENGWVVVNSGSFNKAEELLALLRKSLGTLPVVPAFANYDLDVFLTDWLTNFSTPEGFAIGSDAELEEADDSGAQVKLKGHDLSCDEVKSHLETGKRVTKLALDWQERVKFMLQNDGSIKRLSYSDTLKEENADIPKEDMAVKLDADFILASEEIKQLLEELTQGLGDIDDLA</sequence>
<keyword id="KW-0963">Cytoplasm</keyword>
<keyword id="KW-0233">DNA recombination</keyword>
<keyword id="KW-1185">Reference proteome</keyword>
<feature type="chain" id="PRO_1000021221" description="Recombination-associated protein RdgC">
    <location>
        <begin position="1"/>
        <end position="303"/>
    </location>
</feature>
<accession>Q3II43</accession>
<proteinExistence type="inferred from homology"/>
<gene>
    <name evidence="1" type="primary">rdgC</name>
    <name type="ordered locus">PSHAa2381</name>
</gene>
<evidence type="ECO:0000255" key="1">
    <source>
        <dbReference type="HAMAP-Rule" id="MF_00194"/>
    </source>
</evidence>
<reference key="1">
    <citation type="journal article" date="2005" name="Genome Res.">
        <title>Coping with cold: the genome of the versatile marine Antarctica bacterium Pseudoalteromonas haloplanktis TAC125.</title>
        <authorList>
            <person name="Medigue C."/>
            <person name="Krin E."/>
            <person name="Pascal G."/>
            <person name="Barbe V."/>
            <person name="Bernsel A."/>
            <person name="Bertin P.N."/>
            <person name="Cheung F."/>
            <person name="Cruveiller S."/>
            <person name="D'Amico S."/>
            <person name="Duilio A."/>
            <person name="Fang G."/>
            <person name="Feller G."/>
            <person name="Ho C."/>
            <person name="Mangenot S."/>
            <person name="Marino G."/>
            <person name="Nilsson J."/>
            <person name="Parrilli E."/>
            <person name="Rocha E.P.C."/>
            <person name="Rouy Z."/>
            <person name="Sekowska A."/>
            <person name="Tutino M.L."/>
            <person name="Vallenet D."/>
            <person name="von Heijne G."/>
            <person name="Danchin A."/>
        </authorList>
    </citation>
    <scope>NUCLEOTIDE SEQUENCE [LARGE SCALE GENOMIC DNA]</scope>
    <source>
        <strain>TAC 125</strain>
    </source>
</reference>
<name>RDGC_PSET1</name>
<dbReference type="EMBL" id="CR954246">
    <property type="protein sequence ID" value="CAI87430.1"/>
    <property type="molecule type" value="Genomic_DNA"/>
</dbReference>
<dbReference type="SMR" id="Q3II43"/>
<dbReference type="STRING" id="326442.PSHAa2381"/>
<dbReference type="KEGG" id="pha:PSHAa2381"/>
<dbReference type="PATRIC" id="fig|326442.8.peg.2294"/>
<dbReference type="eggNOG" id="COG2974">
    <property type="taxonomic scope" value="Bacteria"/>
</dbReference>
<dbReference type="HOGENOM" id="CLU_052038_1_1_6"/>
<dbReference type="BioCyc" id="PHAL326442:PSHA_RS11730-MONOMER"/>
<dbReference type="Proteomes" id="UP000006843">
    <property type="component" value="Chromosome I"/>
</dbReference>
<dbReference type="GO" id="GO:0043590">
    <property type="term" value="C:bacterial nucleoid"/>
    <property type="evidence" value="ECO:0007669"/>
    <property type="project" value="TreeGrafter"/>
</dbReference>
<dbReference type="GO" id="GO:0005737">
    <property type="term" value="C:cytoplasm"/>
    <property type="evidence" value="ECO:0007669"/>
    <property type="project" value="UniProtKB-UniRule"/>
</dbReference>
<dbReference type="GO" id="GO:0003690">
    <property type="term" value="F:double-stranded DNA binding"/>
    <property type="evidence" value="ECO:0007669"/>
    <property type="project" value="TreeGrafter"/>
</dbReference>
<dbReference type="GO" id="GO:0006310">
    <property type="term" value="P:DNA recombination"/>
    <property type="evidence" value="ECO:0007669"/>
    <property type="project" value="UniProtKB-UniRule"/>
</dbReference>
<dbReference type="GO" id="GO:0000018">
    <property type="term" value="P:regulation of DNA recombination"/>
    <property type="evidence" value="ECO:0007669"/>
    <property type="project" value="TreeGrafter"/>
</dbReference>
<dbReference type="HAMAP" id="MF_00194">
    <property type="entry name" value="RdgC"/>
    <property type="match status" value="1"/>
</dbReference>
<dbReference type="InterPro" id="IPR007476">
    <property type="entry name" value="RdgC"/>
</dbReference>
<dbReference type="NCBIfam" id="NF001462">
    <property type="entry name" value="PRK00321.1-3"/>
    <property type="match status" value="1"/>
</dbReference>
<dbReference type="NCBIfam" id="NF001464">
    <property type="entry name" value="PRK00321.1-5"/>
    <property type="match status" value="1"/>
</dbReference>
<dbReference type="PANTHER" id="PTHR38103">
    <property type="entry name" value="RECOMBINATION-ASSOCIATED PROTEIN RDGC"/>
    <property type="match status" value="1"/>
</dbReference>
<dbReference type="PANTHER" id="PTHR38103:SF1">
    <property type="entry name" value="RECOMBINATION-ASSOCIATED PROTEIN RDGC"/>
    <property type="match status" value="1"/>
</dbReference>
<dbReference type="Pfam" id="PF04381">
    <property type="entry name" value="RdgC"/>
    <property type="match status" value="1"/>
</dbReference>
<protein>
    <recommendedName>
        <fullName evidence="1">Recombination-associated protein RdgC</fullName>
    </recommendedName>
</protein>
<organism>
    <name type="scientific">Pseudoalteromonas translucida (strain TAC 125)</name>
    <dbReference type="NCBI Taxonomy" id="326442"/>
    <lineage>
        <taxon>Bacteria</taxon>
        <taxon>Pseudomonadati</taxon>
        <taxon>Pseudomonadota</taxon>
        <taxon>Gammaproteobacteria</taxon>
        <taxon>Alteromonadales</taxon>
        <taxon>Pseudoalteromonadaceae</taxon>
        <taxon>Pseudoalteromonas</taxon>
    </lineage>
</organism>